<name>HTPX_STRPN</name>
<dbReference type="EC" id="3.4.24.-" evidence="1"/>
<dbReference type="EMBL" id="AE005672">
    <property type="protein sequence ID" value="AAK75387.1"/>
    <property type="molecule type" value="Genomic_DNA"/>
</dbReference>
<dbReference type="PIR" id="B95149">
    <property type="entry name" value="B95149"/>
</dbReference>
<dbReference type="RefSeq" id="WP_000895734.1">
    <property type="nucleotide sequence ID" value="NZ_CP155539.1"/>
</dbReference>
<dbReference type="PaxDb" id="170187-SP_1283"/>
<dbReference type="EnsemblBacteria" id="AAK75387">
    <property type="protein sequence ID" value="AAK75387"/>
    <property type="gene ID" value="SP_1283"/>
</dbReference>
<dbReference type="KEGG" id="spn:SP_1283"/>
<dbReference type="eggNOG" id="COG0501">
    <property type="taxonomic scope" value="Bacteria"/>
</dbReference>
<dbReference type="PhylomeDB" id="Q97QD6"/>
<dbReference type="BioCyc" id="SPNE170187:G1FZB-1296-MONOMER"/>
<dbReference type="Proteomes" id="UP000000585">
    <property type="component" value="Chromosome"/>
</dbReference>
<dbReference type="GO" id="GO:0005886">
    <property type="term" value="C:plasma membrane"/>
    <property type="evidence" value="ECO:0007669"/>
    <property type="project" value="UniProtKB-SubCell"/>
</dbReference>
<dbReference type="GO" id="GO:0004222">
    <property type="term" value="F:metalloendopeptidase activity"/>
    <property type="evidence" value="ECO:0007669"/>
    <property type="project" value="UniProtKB-UniRule"/>
</dbReference>
<dbReference type="GO" id="GO:0008270">
    <property type="term" value="F:zinc ion binding"/>
    <property type="evidence" value="ECO:0007669"/>
    <property type="project" value="UniProtKB-UniRule"/>
</dbReference>
<dbReference type="GO" id="GO:0006508">
    <property type="term" value="P:proteolysis"/>
    <property type="evidence" value="ECO:0007669"/>
    <property type="project" value="UniProtKB-KW"/>
</dbReference>
<dbReference type="CDD" id="cd07340">
    <property type="entry name" value="M48B_Htpx_like"/>
    <property type="match status" value="1"/>
</dbReference>
<dbReference type="Gene3D" id="3.30.2010.10">
    <property type="entry name" value="Metalloproteases ('zincins'), catalytic domain"/>
    <property type="match status" value="1"/>
</dbReference>
<dbReference type="HAMAP" id="MF_00188">
    <property type="entry name" value="Pept_M48_protease_HtpX"/>
    <property type="match status" value="1"/>
</dbReference>
<dbReference type="InterPro" id="IPR050083">
    <property type="entry name" value="HtpX_protease"/>
</dbReference>
<dbReference type="InterPro" id="IPR022919">
    <property type="entry name" value="Pept_M48_protease_HtpX"/>
</dbReference>
<dbReference type="InterPro" id="IPR001915">
    <property type="entry name" value="Peptidase_M48"/>
</dbReference>
<dbReference type="NCBIfam" id="NF003425">
    <property type="entry name" value="PRK04897.1"/>
    <property type="match status" value="1"/>
</dbReference>
<dbReference type="PANTHER" id="PTHR43221">
    <property type="entry name" value="PROTEASE HTPX"/>
    <property type="match status" value="1"/>
</dbReference>
<dbReference type="PANTHER" id="PTHR43221:SF1">
    <property type="entry name" value="PROTEASE HTPX"/>
    <property type="match status" value="1"/>
</dbReference>
<dbReference type="Pfam" id="PF01435">
    <property type="entry name" value="Peptidase_M48"/>
    <property type="match status" value="1"/>
</dbReference>
<proteinExistence type="inferred from homology"/>
<keyword id="KW-1003">Cell membrane</keyword>
<keyword id="KW-0378">Hydrolase</keyword>
<keyword id="KW-0472">Membrane</keyword>
<keyword id="KW-0479">Metal-binding</keyword>
<keyword id="KW-0482">Metalloprotease</keyword>
<keyword id="KW-0645">Protease</keyword>
<keyword id="KW-1185">Reference proteome</keyword>
<keyword id="KW-0812">Transmembrane</keyword>
<keyword id="KW-1133">Transmembrane helix</keyword>
<keyword id="KW-0862">Zinc</keyword>
<reference key="1">
    <citation type="journal article" date="2001" name="Science">
        <title>Complete genome sequence of a virulent isolate of Streptococcus pneumoniae.</title>
        <authorList>
            <person name="Tettelin H."/>
            <person name="Nelson K.E."/>
            <person name="Paulsen I.T."/>
            <person name="Eisen J.A."/>
            <person name="Read T.D."/>
            <person name="Peterson S.N."/>
            <person name="Heidelberg J.F."/>
            <person name="DeBoy R.T."/>
            <person name="Haft D.H."/>
            <person name="Dodson R.J."/>
            <person name="Durkin A.S."/>
            <person name="Gwinn M.L."/>
            <person name="Kolonay J.F."/>
            <person name="Nelson W.C."/>
            <person name="Peterson J.D."/>
            <person name="Umayam L.A."/>
            <person name="White O."/>
            <person name="Salzberg S.L."/>
            <person name="Lewis M.R."/>
            <person name="Radune D."/>
            <person name="Holtzapple E.K."/>
            <person name="Khouri H.M."/>
            <person name="Wolf A.M."/>
            <person name="Utterback T.R."/>
            <person name="Hansen C.L."/>
            <person name="McDonald L.A."/>
            <person name="Feldblyum T.V."/>
            <person name="Angiuoli S.V."/>
            <person name="Dickinson T."/>
            <person name="Hickey E.K."/>
            <person name="Holt I.E."/>
            <person name="Loftus B.J."/>
            <person name="Yang F."/>
            <person name="Smith H.O."/>
            <person name="Venter J.C."/>
            <person name="Dougherty B.A."/>
            <person name="Morrison D.A."/>
            <person name="Hollingshead S.K."/>
            <person name="Fraser C.M."/>
        </authorList>
    </citation>
    <scope>NUCLEOTIDE SEQUENCE [LARGE SCALE GENOMIC DNA]</scope>
    <source>
        <strain>ATCC BAA-334 / TIGR4</strain>
    </source>
</reference>
<evidence type="ECO:0000255" key="1">
    <source>
        <dbReference type="HAMAP-Rule" id="MF_00188"/>
    </source>
</evidence>
<gene>
    <name evidence="1" type="primary">htpX</name>
    <name type="ordered locus">SP_1283</name>
</gene>
<sequence length="299" mass="32796">MLFDQIASNKRKTWILLLVFFLLLALVGYAVGYLFIRSGLGGLVIALIIGFIYALSMIFQSTEIVMSMNGAREVDEQTAPDLYHVVEDMALVAQIPMPRVFIIDDPALNAFATGSNPQNAAVAATSGLLAIMNREELEAVMGHEVSHIRNYDIRISTIAVALASAITMLSSMAGRMMWWGGAGRRRSDDDRDGNGLEIIMLVVSLLAIVLAPLAATLVQLAISRQREFLADASSVELTRNPQGMINALDKLDNSKPMSRHVDDASSALYINDPKKGGGFQKLFYTHPPISERIERLKQM</sequence>
<accession>Q97QD6</accession>
<protein>
    <recommendedName>
        <fullName evidence="1">Protease HtpX homolog</fullName>
        <ecNumber evidence="1">3.4.24.-</ecNumber>
    </recommendedName>
</protein>
<organism>
    <name type="scientific">Streptococcus pneumoniae serotype 4 (strain ATCC BAA-334 / TIGR4)</name>
    <dbReference type="NCBI Taxonomy" id="170187"/>
    <lineage>
        <taxon>Bacteria</taxon>
        <taxon>Bacillati</taxon>
        <taxon>Bacillota</taxon>
        <taxon>Bacilli</taxon>
        <taxon>Lactobacillales</taxon>
        <taxon>Streptococcaceae</taxon>
        <taxon>Streptococcus</taxon>
    </lineage>
</organism>
<comment type="cofactor">
    <cofactor evidence="1">
        <name>Zn(2+)</name>
        <dbReference type="ChEBI" id="CHEBI:29105"/>
    </cofactor>
    <text evidence="1">Binds 1 zinc ion per subunit.</text>
</comment>
<comment type="subcellular location">
    <subcellularLocation>
        <location evidence="1">Cell membrane</location>
        <topology evidence="1">Multi-pass membrane protein</topology>
    </subcellularLocation>
</comment>
<comment type="similarity">
    <text evidence="1">Belongs to the peptidase M48B family.</text>
</comment>
<feature type="chain" id="PRO_0000138896" description="Protease HtpX homolog">
    <location>
        <begin position="1"/>
        <end position="299"/>
    </location>
</feature>
<feature type="transmembrane region" description="Helical" evidence="1">
    <location>
        <begin position="15"/>
        <end position="35"/>
    </location>
</feature>
<feature type="transmembrane region" description="Helical" evidence="1">
    <location>
        <begin position="39"/>
        <end position="59"/>
    </location>
</feature>
<feature type="transmembrane region" description="Helical" evidence="1">
    <location>
        <begin position="158"/>
        <end position="178"/>
    </location>
</feature>
<feature type="transmembrane region" description="Helical" evidence="1">
    <location>
        <begin position="198"/>
        <end position="218"/>
    </location>
</feature>
<feature type="active site" evidence="1">
    <location>
        <position position="144"/>
    </location>
</feature>
<feature type="binding site" evidence="1">
    <location>
        <position position="143"/>
    </location>
    <ligand>
        <name>Zn(2+)</name>
        <dbReference type="ChEBI" id="CHEBI:29105"/>
        <note>catalytic</note>
    </ligand>
</feature>
<feature type="binding site" evidence="1">
    <location>
        <position position="147"/>
    </location>
    <ligand>
        <name>Zn(2+)</name>
        <dbReference type="ChEBI" id="CHEBI:29105"/>
        <note>catalytic</note>
    </ligand>
</feature>
<feature type="binding site" evidence="1">
    <location>
        <position position="227"/>
    </location>
    <ligand>
        <name>Zn(2+)</name>
        <dbReference type="ChEBI" id="CHEBI:29105"/>
        <note>catalytic</note>
    </ligand>
</feature>